<name>RS6_MYCPA</name>
<comment type="function">
    <text evidence="1">Binds together with bS18 to 16S ribosomal RNA.</text>
</comment>
<comment type="similarity">
    <text evidence="1">Belongs to the bacterial ribosomal protein bS6 family.</text>
</comment>
<protein>
    <recommendedName>
        <fullName evidence="1">Small ribosomal subunit protein bS6</fullName>
    </recommendedName>
    <alternativeName>
        <fullName evidence="2">30S ribosomal protein S6</fullName>
    </alternativeName>
</protein>
<dbReference type="EMBL" id="AE016958">
    <property type="protein sequence ID" value="AAS02384.1"/>
    <property type="molecule type" value="Genomic_DNA"/>
</dbReference>
<dbReference type="RefSeq" id="WP_003874732.1">
    <property type="nucleotide sequence ID" value="NZ_CP106873.1"/>
</dbReference>
<dbReference type="SMR" id="Q744V6"/>
<dbReference type="STRING" id="262316.MAP_0067"/>
<dbReference type="GeneID" id="75268000"/>
<dbReference type="KEGG" id="mpa:MAP_0067"/>
<dbReference type="eggNOG" id="COG0360">
    <property type="taxonomic scope" value="Bacteria"/>
</dbReference>
<dbReference type="HOGENOM" id="CLU_113441_5_3_11"/>
<dbReference type="Proteomes" id="UP000000580">
    <property type="component" value="Chromosome"/>
</dbReference>
<dbReference type="GO" id="GO:0005737">
    <property type="term" value="C:cytoplasm"/>
    <property type="evidence" value="ECO:0007669"/>
    <property type="project" value="UniProtKB-ARBA"/>
</dbReference>
<dbReference type="GO" id="GO:1990904">
    <property type="term" value="C:ribonucleoprotein complex"/>
    <property type="evidence" value="ECO:0007669"/>
    <property type="project" value="UniProtKB-KW"/>
</dbReference>
<dbReference type="GO" id="GO:0005840">
    <property type="term" value="C:ribosome"/>
    <property type="evidence" value="ECO:0007669"/>
    <property type="project" value="UniProtKB-KW"/>
</dbReference>
<dbReference type="GO" id="GO:0070181">
    <property type="term" value="F:small ribosomal subunit rRNA binding"/>
    <property type="evidence" value="ECO:0007669"/>
    <property type="project" value="TreeGrafter"/>
</dbReference>
<dbReference type="GO" id="GO:0003735">
    <property type="term" value="F:structural constituent of ribosome"/>
    <property type="evidence" value="ECO:0007669"/>
    <property type="project" value="InterPro"/>
</dbReference>
<dbReference type="GO" id="GO:0006412">
    <property type="term" value="P:translation"/>
    <property type="evidence" value="ECO:0007669"/>
    <property type="project" value="UniProtKB-UniRule"/>
</dbReference>
<dbReference type="CDD" id="cd00473">
    <property type="entry name" value="bS6"/>
    <property type="match status" value="1"/>
</dbReference>
<dbReference type="FunFam" id="3.30.70.60:FF:000002">
    <property type="entry name" value="30S ribosomal protein S6"/>
    <property type="match status" value="1"/>
</dbReference>
<dbReference type="Gene3D" id="3.30.70.60">
    <property type="match status" value="1"/>
</dbReference>
<dbReference type="HAMAP" id="MF_00360">
    <property type="entry name" value="Ribosomal_bS6"/>
    <property type="match status" value="1"/>
</dbReference>
<dbReference type="InterPro" id="IPR000529">
    <property type="entry name" value="Ribosomal_bS6"/>
</dbReference>
<dbReference type="InterPro" id="IPR020815">
    <property type="entry name" value="Ribosomal_bS6_CS"/>
</dbReference>
<dbReference type="InterPro" id="IPR035980">
    <property type="entry name" value="Ribosomal_bS6_sf"/>
</dbReference>
<dbReference type="InterPro" id="IPR020814">
    <property type="entry name" value="Ribosomal_S6_plastid/chlpt"/>
</dbReference>
<dbReference type="InterPro" id="IPR014717">
    <property type="entry name" value="Transl_elong_EF1B/ribsomal_bS6"/>
</dbReference>
<dbReference type="NCBIfam" id="TIGR00166">
    <property type="entry name" value="S6"/>
    <property type="match status" value="1"/>
</dbReference>
<dbReference type="PANTHER" id="PTHR21011">
    <property type="entry name" value="MITOCHONDRIAL 28S RIBOSOMAL PROTEIN S6"/>
    <property type="match status" value="1"/>
</dbReference>
<dbReference type="PANTHER" id="PTHR21011:SF1">
    <property type="entry name" value="SMALL RIBOSOMAL SUBUNIT PROTEIN BS6M"/>
    <property type="match status" value="1"/>
</dbReference>
<dbReference type="Pfam" id="PF01250">
    <property type="entry name" value="Ribosomal_S6"/>
    <property type="match status" value="1"/>
</dbReference>
<dbReference type="SUPFAM" id="SSF54995">
    <property type="entry name" value="Ribosomal protein S6"/>
    <property type="match status" value="1"/>
</dbReference>
<dbReference type="PROSITE" id="PS01048">
    <property type="entry name" value="RIBOSOMAL_S6"/>
    <property type="match status" value="1"/>
</dbReference>
<accession>Q744V6</accession>
<reference key="1">
    <citation type="journal article" date="2005" name="Proc. Natl. Acad. Sci. U.S.A.">
        <title>The complete genome sequence of Mycobacterium avium subspecies paratuberculosis.</title>
        <authorList>
            <person name="Li L."/>
            <person name="Bannantine J.P."/>
            <person name="Zhang Q."/>
            <person name="Amonsin A."/>
            <person name="May B.J."/>
            <person name="Alt D."/>
            <person name="Banerji N."/>
            <person name="Kanjilal S."/>
            <person name="Kapur V."/>
        </authorList>
    </citation>
    <scope>NUCLEOTIDE SEQUENCE [LARGE SCALE GENOMIC DNA]</scope>
    <source>
        <strain>ATCC BAA-968 / K-10</strain>
    </source>
</reference>
<keyword id="KW-1185">Reference proteome</keyword>
<keyword id="KW-0687">Ribonucleoprotein</keyword>
<keyword id="KW-0689">Ribosomal protein</keyword>
<keyword id="KW-0694">RNA-binding</keyword>
<keyword id="KW-0699">rRNA-binding</keyword>
<organism>
    <name type="scientific">Mycolicibacterium paratuberculosis (strain ATCC BAA-968 / K-10)</name>
    <name type="common">Mycobacterium paratuberculosis</name>
    <dbReference type="NCBI Taxonomy" id="262316"/>
    <lineage>
        <taxon>Bacteria</taxon>
        <taxon>Bacillati</taxon>
        <taxon>Actinomycetota</taxon>
        <taxon>Actinomycetes</taxon>
        <taxon>Mycobacteriales</taxon>
        <taxon>Mycobacteriaceae</taxon>
        <taxon>Mycobacterium</taxon>
        <taxon>Mycobacterium avium complex (MAC)</taxon>
    </lineage>
</organism>
<evidence type="ECO:0000255" key="1">
    <source>
        <dbReference type="HAMAP-Rule" id="MF_00360"/>
    </source>
</evidence>
<evidence type="ECO:0000305" key="2"/>
<sequence length="96" mass="10994">MRPYEIMVILDPTLDERTVAPSLETFLNVVRKDGGSVEKVDIWGRRRLAYEIAKHAEGIYVVIDLKAEPATVSELDRQLSLNESVLRTKVMRTDKH</sequence>
<feature type="chain" id="PRO_0000176798" description="Small ribosomal subunit protein bS6">
    <location>
        <begin position="1"/>
        <end position="96"/>
    </location>
</feature>
<gene>
    <name evidence="1" type="primary">rpsF</name>
    <name type="ordered locus">MAP_0067</name>
</gene>
<proteinExistence type="inferred from homology"/>